<reference key="1">
    <citation type="journal article" date="2002" name="Nature">
        <title>The genome sequence of Schizosaccharomyces pombe.</title>
        <authorList>
            <person name="Wood V."/>
            <person name="Gwilliam R."/>
            <person name="Rajandream M.A."/>
            <person name="Lyne M.H."/>
            <person name="Lyne R."/>
            <person name="Stewart A."/>
            <person name="Sgouros J.G."/>
            <person name="Peat N."/>
            <person name="Hayles J."/>
            <person name="Baker S.G."/>
            <person name="Basham D."/>
            <person name="Bowman S."/>
            <person name="Brooks K."/>
            <person name="Brown D."/>
            <person name="Brown S."/>
            <person name="Chillingworth T."/>
            <person name="Churcher C.M."/>
            <person name="Collins M."/>
            <person name="Connor R."/>
            <person name="Cronin A."/>
            <person name="Davis P."/>
            <person name="Feltwell T."/>
            <person name="Fraser A."/>
            <person name="Gentles S."/>
            <person name="Goble A."/>
            <person name="Hamlin N."/>
            <person name="Harris D.E."/>
            <person name="Hidalgo J."/>
            <person name="Hodgson G."/>
            <person name="Holroyd S."/>
            <person name="Hornsby T."/>
            <person name="Howarth S."/>
            <person name="Huckle E.J."/>
            <person name="Hunt S."/>
            <person name="Jagels K."/>
            <person name="James K.D."/>
            <person name="Jones L."/>
            <person name="Jones M."/>
            <person name="Leather S."/>
            <person name="McDonald S."/>
            <person name="McLean J."/>
            <person name="Mooney P."/>
            <person name="Moule S."/>
            <person name="Mungall K.L."/>
            <person name="Murphy L.D."/>
            <person name="Niblett D."/>
            <person name="Odell C."/>
            <person name="Oliver K."/>
            <person name="O'Neil S."/>
            <person name="Pearson D."/>
            <person name="Quail M.A."/>
            <person name="Rabbinowitsch E."/>
            <person name="Rutherford K.M."/>
            <person name="Rutter S."/>
            <person name="Saunders D."/>
            <person name="Seeger K."/>
            <person name="Sharp S."/>
            <person name="Skelton J."/>
            <person name="Simmonds M.N."/>
            <person name="Squares R."/>
            <person name="Squares S."/>
            <person name="Stevens K."/>
            <person name="Taylor K."/>
            <person name="Taylor R.G."/>
            <person name="Tivey A."/>
            <person name="Walsh S.V."/>
            <person name="Warren T."/>
            <person name="Whitehead S."/>
            <person name="Woodward J.R."/>
            <person name="Volckaert G."/>
            <person name="Aert R."/>
            <person name="Robben J."/>
            <person name="Grymonprez B."/>
            <person name="Weltjens I."/>
            <person name="Vanstreels E."/>
            <person name="Rieger M."/>
            <person name="Schaefer M."/>
            <person name="Mueller-Auer S."/>
            <person name="Gabel C."/>
            <person name="Fuchs M."/>
            <person name="Duesterhoeft A."/>
            <person name="Fritzc C."/>
            <person name="Holzer E."/>
            <person name="Moestl D."/>
            <person name="Hilbert H."/>
            <person name="Borzym K."/>
            <person name="Langer I."/>
            <person name="Beck A."/>
            <person name="Lehrach H."/>
            <person name="Reinhardt R."/>
            <person name="Pohl T.M."/>
            <person name="Eger P."/>
            <person name="Zimmermann W."/>
            <person name="Wedler H."/>
            <person name="Wambutt R."/>
            <person name="Purnelle B."/>
            <person name="Goffeau A."/>
            <person name="Cadieu E."/>
            <person name="Dreano S."/>
            <person name="Gloux S."/>
            <person name="Lelaure V."/>
            <person name="Mottier S."/>
            <person name="Galibert F."/>
            <person name="Aves S.J."/>
            <person name="Xiang Z."/>
            <person name="Hunt C."/>
            <person name="Moore K."/>
            <person name="Hurst S.M."/>
            <person name="Lucas M."/>
            <person name="Rochet M."/>
            <person name="Gaillardin C."/>
            <person name="Tallada V.A."/>
            <person name="Garzon A."/>
            <person name="Thode G."/>
            <person name="Daga R.R."/>
            <person name="Cruzado L."/>
            <person name="Jimenez J."/>
            <person name="Sanchez M."/>
            <person name="del Rey F."/>
            <person name="Benito J."/>
            <person name="Dominguez A."/>
            <person name="Revuelta J.L."/>
            <person name="Moreno S."/>
            <person name="Armstrong J."/>
            <person name="Forsburg S.L."/>
            <person name="Cerutti L."/>
            <person name="Lowe T."/>
            <person name="McCombie W.R."/>
            <person name="Paulsen I."/>
            <person name="Potashkin J."/>
            <person name="Shpakovski G.V."/>
            <person name="Ussery D."/>
            <person name="Barrell B.G."/>
            <person name="Nurse P."/>
        </authorList>
    </citation>
    <scope>NUCLEOTIDE SEQUENCE [LARGE SCALE GENOMIC DNA]</scope>
    <source>
        <strain>972 / ATCC 24843</strain>
    </source>
</reference>
<reference key="2">
    <citation type="journal article" date="2004" name="Mol. Genet. Genomics">
        <title>Two-hybrid search for proteins that interact with Sad1 and Kms1, two membrane-bound components of the spindle pole body in fission yeast.</title>
        <authorList>
            <person name="Miki F."/>
            <person name="Kurabayashi A."/>
            <person name="Tange Y."/>
            <person name="Okazaki K."/>
            <person name="Shimanuki M."/>
            <person name="Niwa O."/>
        </authorList>
    </citation>
    <scope>INTERACTION WITH SAD1</scope>
</reference>
<reference key="3">
    <citation type="journal article" date="2005" name="Mol. Biol. Cell">
        <title>The novel fission yeast protein Pal1p interacts with Hip1-related Sla2p/End4p and is involved in cellular morphogenesis.</title>
        <authorList>
            <person name="Ge W."/>
            <person name="Chew T.G."/>
            <person name="Wachtler V."/>
            <person name="Naqvi S.N."/>
            <person name="Balasubramanian M.K."/>
        </authorList>
    </citation>
    <scope>FUNCTION</scope>
    <scope>SUBCELLULAR LOCATION</scope>
    <scope>INTERACTION WITH END4</scope>
</reference>
<reference key="4">
    <citation type="journal article" date="2008" name="J. Proteome Res.">
        <title>Phosphoproteome analysis of fission yeast.</title>
        <authorList>
            <person name="Wilson-Grady J.T."/>
            <person name="Villen J."/>
            <person name="Gygi S.P."/>
        </authorList>
    </citation>
    <scope>PHOSPHORYLATION [LARGE SCALE ANALYSIS] AT SER-66; SER-119; SER-301; SER-339; THR-358 AND SER-370</scope>
    <scope>IDENTIFICATION BY MASS SPECTROMETRY</scope>
</reference>
<name>PAL1_SCHPO</name>
<keyword id="KW-1003">Cell membrane</keyword>
<keyword id="KW-0472">Membrane</keyword>
<keyword id="KW-0597">Phosphoprotein</keyword>
<keyword id="KW-1185">Reference proteome</keyword>
<evidence type="ECO:0000256" key="1">
    <source>
        <dbReference type="SAM" id="MobiDB-lite"/>
    </source>
</evidence>
<evidence type="ECO:0000269" key="2">
    <source>
    </source>
</evidence>
<evidence type="ECO:0000269" key="3">
    <source>
    </source>
</evidence>
<evidence type="ECO:0000269" key="4">
    <source>
    </source>
</evidence>
<evidence type="ECO:0000305" key="5"/>
<comment type="function">
    <text evidence="3">Involved in cellular morphogenesis and cell wall integrity. Important for the maintenance of a cylindrical cell shape.</text>
</comment>
<comment type="subunit">
    <text evidence="2 3">Interacts with end4 and sad1.</text>
</comment>
<comment type="subcellular location">
    <subcellularLocation>
        <location evidence="3">Cell membrane</location>
        <topology evidence="3">Peripheral membrane protein</topology>
    </subcellularLocation>
    <text>Localizes to cell tips during interphase and to the medial ring during mitosis and cytokinesis.</text>
</comment>
<comment type="similarity">
    <text evidence="5">Belongs to the pal1 family.</text>
</comment>
<gene>
    <name type="primary">pal1</name>
    <name type="ORF">SPCP1E11.04c</name>
</gene>
<organism>
    <name type="scientific">Schizosaccharomyces pombe (strain 972 / ATCC 24843)</name>
    <name type="common">Fission yeast</name>
    <dbReference type="NCBI Taxonomy" id="284812"/>
    <lineage>
        <taxon>Eukaryota</taxon>
        <taxon>Fungi</taxon>
        <taxon>Dikarya</taxon>
        <taxon>Ascomycota</taxon>
        <taxon>Taphrinomycotina</taxon>
        <taxon>Schizosaccharomycetes</taxon>
        <taxon>Schizosaccharomycetales</taxon>
        <taxon>Schizosaccharomycetaceae</taxon>
        <taxon>Schizosaccharomyces</taxon>
    </lineage>
</organism>
<proteinExistence type="evidence at protein level"/>
<sequence length="425" mass="46629">MMVIENPFLSTATSSQTPQEDGVYTSSLHNSNNPFLAPKTERVADPVMESMADDLFNSIQKKKEPSPASSASASPVKKSAEALAERSNSSMGTFDPPPRYSKIARARSTHVASSSRHRSPSHNDSSPSTQSSLKSRGSIRRYKSVREGSHRPGRSSKEPLDQIDRLDVTGLYGSGSFHHDGPFDACRPHRNRNSKKAPVAAFPKDSIANSIPKVGETYNDPSVPKDFSRKAIHESLRTKNILQSPYKSVGIEEEFPSSGNNDTPGLTDSTRIEGAMASKNAIARNEEMLAMEKAGLGRKNSLIRKLGLNRSASMMSRTPNTLNRPSNYRSHSSMGTRRSPLNSPSQLDPISNENESDTDDSNTGLRNRTSPTAAPPPPSRRKTGGLNTRPYPQHAESQMSLPLTAKERSKPKKMGFFRRLFHKKS</sequence>
<dbReference type="EMBL" id="CU329672">
    <property type="protein sequence ID" value="CAB54863.1"/>
    <property type="molecule type" value="Genomic_DNA"/>
</dbReference>
<dbReference type="PIR" id="T41683">
    <property type="entry name" value="T41683"/>
</dbReference>
<dbReference type="RefSeq" id="NP_588557.1">
    <property type="nucleotide sequence ID" value="NM_001023544.2"/>
</dbReference>
<dbReference type="BioGRID" id="276099">
    <property type="interactions" value="11"/>
</dbReference>
<dbReference type="FunCoup" id="Q9UU83">
    <property type="interactions" value="216"/>
</dbReference>
<dbReference type="IntAct" id="Q9UU83">
    <property type="interactions" value="1"/>
</dbReference>
<dbReference type="STRING" id="284812.Q9UU83"/>
<dbReference type="iPTMnet" id="Q9UU83"/>
<dbReference type="PaxDb" id="4896-SPCP1E11.04c.1"/>
<dbReference type="EnsemblFungi" id="SPCP1E11.04c.1">
    <property type="protein sequence ID" value="SPCP1E11.04c.1:pep"/>
    <property type="gene ID" value="SPCP1E11.04c"/>
</dbReference>
<dbReference type="GeneID" id="2539537"/>
<dbReference type="KEGG" id="spo:2539537"/>
<dbReference type="PomBase" id="SPCP1E11.04c">
    <property type="gene designation" value="pal1"/>
</dbReference>
<dbReference type="VEuPathDB" id="FungiDB:SPCP1E11.04c"/>
<dbReference type="eggNOG" id="ENOG502QPHY">
    <property type="taxonomic scope" value="Eukaryota"/>
</dbReference>
<dbReference type="HOGENOM" id="CLU_573854_0_0_1"/>
<dbReference type="InParanoid" id="Q9UU83"/>
<dbReference type="OMA" id="CRPHRNR"/>
<dbReference type="PhylomeDB" id="Q9UU83"/>
<dbReference type="PRO" id="PR:Q9UU83"/>
<dbReference type="Proteomes" id="UP000002485">
    <property type="component" value="Chromosome III"/>
</dbReference>
<dbReference type="GO" id="GO:0032153">
    <property type="term" value="C:cell division site"/>
    <property type="evidence" value="ECO:0000314"/>
    <property type="project" value="PomBase"/>
</dbReference>
<dbReference type="GO" id="GO:0051286">
    <property type="term" value="C:cell tip"/>
    <property type="evidence" value="ECO:0000314"/>
    <property type="project" value="PomBase"/>
</dbReference>
<dbReference type="GO" id="GO:0005737">
    <property type="term" value="C:cytoplasm"/>
    <property type="evidence" value="ECO:0000318"/>
    <property type="project" value="GO_Central"/>
</dbReference>
<dbReference type="GO" id="GO:0031097">
    <property type="term" value="C:medial cortex"/>
    <property type="evidence" value="ECO:0000314"/>
    <property type="project" value="PomBase"/>
</dbReference>
<dbReference type="GO" id="GO:0005886">
    <property type="term" value="C:plasma membrane"/>
    <property type="evidence" value="ECO:0007669"/>
    <property type="project" value="UniProtKB-SubCell"/>
</dbReference>
<dbReference type="GO" id="GO:0030427">
    <property type="term" value="C:site of polarized growth"/>
    <property type="evidence" value="ECO:0000314"/>
    <property type="project" value="PomBase"/>
</dbReference>
<dbReference type="GO" id="GO:0072583">
    <property type="term" value="P:clathrin-dependent endocytosis"/>
    <property type="evidence" value="ECO:0000250"/>
    <property type="project" value="PomBase"/>
</dbReference>
<dbReference type="InterPro" id="IPR013226">
    <property type="entry name" value="Pal1"/>
</dbReference>
<dbReference type="PANTHER" id="PTHR28307">
    <property type="entry name" value="PROTEIN PAL1"/>
    <property type="match status" value="1"/>
</dbReference>
<dbReference type="PANTHER" id="PTHR28307:SF2">
    <property type="entry name" value="PROTEIN PAL1"/>
    <property type="match status" value="1"/>
</dbReference>
<dbReference type="Pfam" id="PF08316">
    <property type="entry name" value="Pal1"/>
    <property type="match status" value="1"/>
</dbReference>
<accession>Q9UU83</accession>
<protein>
    <recommendedName>
        <fullName>Protein pal1</fullName>
    </recommendedName>
    <alternativeName>
        <fullName>Pears and lemons protein 1</fullName>
    </alternativeName>
</protein>
<feature type="chain" id="PRO_0000116895" description="Protein pal1">
    <location>
        <begin position="1"/>
        <end position="425"/>
    </location>
</feature>
<feature type="region of interest" description="Disordered" evidence="1">
    <location>
        <begin position="1"/>
        <end position="204"/>
    </location>
</feature>
<feature type="region of interest" description="Disordered" evidence="1">
    <location>
        <begin position="307"/>
        <end position="425"/>
    </location>
</feature>
<feature type="compositionally biased region" description="Polar residues" evidence="1">
    <location>
        <begin position="8"/>
        <end position="34"/>
    </location>
</feature>
<feature type="compositionally biased region" description="Low complexity" evidence="1">
    <location>
        <begin position="66"/>
        <end position="77"/>
    </location>
</feature>
<feature type="compositionally biased region" description="Polar residues" evidence="1">
    <location>
        <begin position="122"/>
        <end position="135"/>
    </location>
</feature>
<feature type="compositionally biased region" description="Basic and acidic residues" evidence="1">
    <location>
        <begin position="144"/>
        <end position="167"/>
    </location>
</feature>
<feature type="compositionally biased region" description="Polar residues" evidence="1">
    <location>
        <begin position="310"/>
        <end position="353"/>
    </location>
</feature>
<feature type="compositionally biased region" description="Basic residues" evidence="1">
    <location>
        <begin position="409"/>
        <end position="425"/>
    </location>
</feature>
<feature type="modified residue" description="Phosphoserine" evidence="4">
    <location>
        <position position="66"/>
    </location>
</feature>
<feature type="modified residue" description="Phosphoserine" evidence="4">
    <location>
        <position position="119"/>
    </location>
</feature>
<feature type="modified residue" description="Phosphoserine" evidence="4">
    <location>
        <position position="301"/>
    </location>
</feature>
<feature type="modified residue" description="Phosphoserine" evidence="4">
    <location>
        <position position="339"/>
    </location>
</feature>
<feature type="modified residue" description="Phosphothreonine" evidence="4">
    <location>
        <position position="358"/>
    </location>
</feature>
<feature type="modified residue" description="Phosphoserine" evidence="4">
    <location>
        <position position="370"/>
    </location>
</feature>